<reference key="1">
    <citation type="submission" date="1996-02" db="EMBL/GenBank/DDBJ databases">
        <authorList>
            <person name="Scott R.A."/>
            <person name="Zeng Q."/>
            <person name="Lewis L.M."/>
            <person name="Colangelo C.M."/>
        </authorList>
    </citation>
    <scope>NUCLEOTIDE SEQUENCE [GENOMIC DNA]</scope>
</reference>
<reference key="2">
    <citation type="journal article" date="1999" name="Genetics">
        <title>Divergence of the hyperthermophilic archaea Pyrococcus furiosus and P. horikoshii inferred from complete genomic sequences.</title>
        <authorList>
            <person name="Maeder D.L."/>
            <person name="Weiss R.B."/>
            <person name="Dunn D.M."/>
            <person name="Cherry J.L."/>
            <person name="Gonzalez J.M."/>
            <person name="DiRuggiero J."/>
            <person name="Robb F.T."/>
        </authorList>
    </citation>
    <scope>NUCLEOTIDE SEQUENCE [LARGE SCALE GENOMIC DNA]</scope>
    <source>
        <strain>ATCC 43587 / DSM 3638 / JCM 8422 / Vc1</strain>
    </source>
</reference>
<name>TBP_PYRFU</name>
<gene>
    <name type="primary">tbp</name>
    <name type="ordered locus">PF1295</name>
</gene>
<dbReference type="EMBL" id="U48392">
    <property type="protein sequence ID" value="AAA93368.1"/>
    <property type="molecule type" value="Genomic_DNA"/>
</dbReference>
<dbReference type="EMBL" id="AE009950">
    <property type="protein sequence ID" value="AAL81419.1"/>
    <property type="molecule type" value="Genomic_DNA"/>
</dbReference>
<dbReference type="PIR" id="T47230">
    <property type="entry name" value="T47230"/>
</dbReference>
<dbReference type="RefSeq" id="WP_011012439.1">
    <property type="nucleotide sequence ID" value="NZ_CP023154.1"/>
</dbReference>
<dbReference type="SMR" id="P62000"/>
<dbReference type="MINT" id="P62000"/>
<dbReference type="STRING" id="186497.PF1295"/>
<dbReference type="PaxDb" id="186497-PF1295"/>
<dbReference type="KEGG" id="pfu:PF1295"/>
<dbReference type="PATRIC" id="fig|186497.12.peg.1358"/>
<dbReference type="eggNOG" id="arCOG01764">
    <property type="taxonomic scope" value="Archaea"/>
</dbReference>
<dbReference type="HOGENOM" id="CLU_060161_4_3_2"/>
<dbReference type="OrthoDB" id="350539at2157"/>
<dbReference type="PhylomeDB" id="P62000"/>
<dbReference type="Proteomes" id="UP000001013">
    <property type="component" value="Chromosome"/>
</dbReference>
<dbReference type="GO" id="GO:0003677">
    <property type="term" value="F:DNA binding"/>
    <property type="evidence" value="ECO:0007669"/>
    <property type="project" value="UniProtKB-KW"/>
</dbReference>
<dbReference type="GO" id="GO:0003700">
    <property type="term" value="F:DNA-binding transcription factor activity"/>
    <property type="evidence" value="ECO:0007669"/>
    <property type="project" value="UniProtKB-UniRule"/>
</dbReference>
<dbReference type="GO" id="GO:0006352">
    <property type="term" value="P:DNA-templated transcription initiation"/>
    <property type="evidence" value="ECO:0007669"/>
    <property type="project" value="InterPro"/>
</dbReference>
<dbReference type="CDD" id="cd04518">
    <property type="entry name" value="TBP_archaea"/>
    <property type="match status" value="1"/>
</dbReference>
<dbReference type="FunFam" id="3.30.310.10:FF:000007">
    <property type="entry name" value="TATA-box-binding protein"/>
    <property type="match status" value="1"/>
</dbReference>
<dbReference type="FunFam" id="3.30.310.10:FF:000010">
    <property type="entry name" value="TATA-box-binding protein"/>
    <property type="match status" value="1"/>
</dbReference>
<dbReference type="Gene3D" id="3.30.310.10">
    <property type="entry name" value="TATA-Binding Protein"/>
    <property type="match status" value="2"/>
</dbReference>
<dbReference type="HAMAP" id="MF_00408">
    <property type="entry name" value="TATA_bind_prot_arch"/>
    <property type="match status" value="1"/>
</dbReference>
<dbReference type="InterPro" id="IPR000814">
    <property type="entry name" value="TBP"/>
</dbReference>
<dbReference type="InterPro" id="IPR033711">
    <property type="entry name" value="TBP_archaea"/>
</dbReference>
<dbReference type="InterPro" id="IPR030491">
    <property type="entry name" value="TBP_CS"/>
</dbReference>
<dbReference type="InterPro" id="IPR012295">
    <property type="entry name" value="TBP_dom_sf"/>
</dbReference>
<dbReference type="NCBIfam" id="NF001593">
    <property type="entry name" value="PRK00394.1-2"/>
    <property type="match status" value="1"/>
</dbReference>
<dbReference type="NCBIfam" id="NF001594">
    <property type="entry name" value="PRK00394.1-3"/>
    <property type="match status" value="1"/>
</dbReference>
<dbReference type="PANTHER" id="PTHR10126">
    <property type="entry name" value="TATA-BOX BINDING PROTEIN"/>
    <property type="match status" value="1"/>
</dbReference>
<dbReference type="Pfam" id="PF00352">
    <property type="entry name" value="TBP"/>
    <property type="match status" value="2"/>
</dbReference>
<dbReference type="PRINTS" id="PR00686">
    <property type="entry name" value="TIFACTORIID"/>
</dbReference>
<dbReference type="SUPFAM" id="SSF55945">
    <property type="entry name" value="TATA-box binding protein-like"/>
    <property type="match status" value="2"/>
</dbReference>
<dbReference type="PROSITE" id="PS00351">
    <property type="entry name" value="TFIID"/>
    <property type="match status" value="2"/>
</dbReference>
<protein>
    <recommendedName>
        <fullName>TATA-box-binding protein</fullName>
    </recommendedName>
    <alternativeName>
        <fullName>Box A-binding protein</fullName>
        <shortName>BAP</shortName>
    </alternativeName>
    <alternativeName>
        <fullName>TATA sequence-binding protein</fullName>
        <shortName>TBP</shortName>
    </alternativeName>
    <alternativeName>
        <fullName>TATA-box factor</fullName>
    </alternativeName>
</protein>
<comment type="function">
    <text evidence="1">General factor that plays a role in the activation of archaeal genes transcribed by RNA polymerase. Binds specifically to the TATA box promoter element which lies close to the position of transcription initiation (By similarity).</text>
</comment>
<comment type="similarity">
    <text evidence="2">Belongs to the TBP family.</text>
</comment>
<sequence length="191" mass="21312">MVDMSKVKLRIENIVASVDLFAQLDLEKVLDLCPNSKYNPEEFPGIICHLDDPKVALLIFSSGKLVVTGAKSVQDIERAVAKLAQKLKSIGVKFKRAPQIDVQNMVFSGDIGREFNLDVVALTLPNCEYEPEQFPGVIYRVKEPKSVILLFSSGKIVCSGAKSEADAWEAVRKLLRELDKYGLLEEEEEEL</sequence>
<organism>
    <name type="scientific">Pyrococcus furiosus (strain ATCC 43587 / DSM 3638 / JCM 8422 / Vc1)</name>
    <dbReference type="NCBI Taxonomy" id="186497"/>
    <lineage>
        <taxon>Archaea</taxon>
        <taxon>Methanobacteriati</taxon>
        <taxon>Methanobacteriota</taxon>
        <taxon>Thermococci</taxon>
        <taxon>Thermococcales</taxon>
        <taxon>Thermococcaceae</taxon>
        <taxon>Pyrococcus</taxon>
    </lineage>
</organism>
<feature type="chain" id="PRO_0000154019" description="TATA-box-binding protein">
    <location>
        <begin position="1"/>
        <end position="191"/>
    </location>
</feature>
<feature type="repeat" description="1">
    <location>
        <begin position="11"/>
        <end position="87"/>
    </location>
</feature>
<feature type="repeat" description="2">
    <location>
        <begin position="102"/>
        <end position="178"/>
    </location>
</feature>
<evidence type="ECO:0000250" key="1"/>
<evidence type="ECO:0000305" key="2"/>
<keyword id="KW-0238">DNA-binding</keyword>
<keyword id="KW-1185">Reference proteome</keyword>
<keyword id="KW-0677">Repeat</keyword>
<keyword id="KW-0804">Transcription</keyword>
<keyword id="KW-0805">Transcription regulation</keyword>
<accession>P62000</accession>
<accession>Q57050</accession>
<proteinExistence type="inferred from homology"/>